<gene>
    <name type="primary">HBA</name>
</gene>
<organism>
    <name type="scientific">Ailurus fulgens</name>
    <name type="common">Himalayan red panda</name>
    <dbReference type="NCBI Taxonomy" id="9649"/>
    <lineage>
        <taxon>Eukaryota</taxon>
        <taxon>Metazoa</taxon>
        <taxon>Chordata</taxon>
        <taxon>Craniata</taxon>
        <taxon>Vertebrata</taxon>
        <taxon>Euteleostomi</taxon>
        <taxon>Mammalia</taxon>
        <taxon>Eutheria</taxon>
        <taxon>Laurasiatheria</taxon>
        <taxon>Carnivora</taxon>
        <taxon>Caniformia</taxon>
        <taxon>Musteloidea</taxon>
        <taxon>Ailuridae</taxon>
        <taxon>Ailurus</taxon>
    </lineage>
</organism>
<feature type="initiator methionine" description="Removed" evidence="5">
    <location>
        <position position="1"/>
    </location>
</feature>
<feature type="chain" id="PRO_0000052536" description="Hemoglobin subunit alpha">
    <location>
        <begin position="2"/>
        <end position="142"/>
    </location>
</feature>
<feature type="peptide" id="PRO_0000455835" description="Hemopressin" evidence="2">
    <location>
        <begin position="96"/>
        <end position="104"/>
    </location>
</feature>
<feature type="domain" description="Globin" evidence="4">
    <location>
        <begin position="2"/>
        <end position="142"/>
    </location>
</feature>
<feature type="binding site" evidence="4">
    <location>
        <position position="59"/>
    </location>
    <ligand>
        <name>O2</name>
        <dbReference type="ChEBI" id="CHEBI:15379"/>
    </ligand>
</feature>
<feature type="binding site" description="proximal binding residue" evidence="4">
    <location>
        <position position="88"/>
    </location>
    <ligand>
        <name>heme b</name>
        <dbReference type="ChEBI" id="CHEBI:60344"/>
    </ligand>
    <ligandPart>
        <name>Fe</name>
        <dbReference type="ChEBI" id="CHEBI:18248"/>
    </ligandPart>
</feature>
<feature type="modified residue" description="Phosphoserine" evidence="3">
    <location>
        <position position="4"/>
    </location>
</feature>
<feature type="modified residue" description="N6-succinyllysine" evidence="1">
    <location>
        <position position="8"/>
    </location>
</feature>
<feature type="modified residue" description="Phosphothreonine" evidence="3">
    <location>
        <position position="9"/>
    </location>
</feature>
<feature type="modified residue" description="N6-succinyllysine" evidence="1">
    <location>
        <position position="12"/>
    </location>
</feature>
<feature type="modified residue" description="N6-acetyllysine; alternate" evidence="3">
    <location>
        <position position="17"/>
    </location>
</feature>
<feature type="modified residue" description="N6-succinyllysine; alternate" evidence="1">
    <location>
        <position position="17"/>
    </location>
</feature>
<feature type="modified residue" description="Phosphotyrosine" evidence="3">
    <location>
        <position position="25"/>
    </location>
</feature>
<feature type="modified residue" description="Phosphoserine" evidence="3">
    <location>
        <position position="36"/>
    </location>
</feature>
<feature type="modified residue" description="N6-succinyllysine" evidence="1">
    <location>
        <position position="41"/>
    </location>
</feature>
<feature type="modified residue" description="Phosphoserine" evidence="3">
    <location>
        <position position="50"/>
    </location>
</feature>
<feature type="modified residue" description="Phosphoserine" evidence="1">
    <location>
        <position position="103"/>
    </location>
</feature>
<feature type="modified residue" description="Phosphothreonine" evidence="1">
    <location>
        <position position="109"/>
    </location>
</feature>
<feature type="modified residue" description="Phosphoserine" evidence="1">
    <location>
        <position position="125"/>
    </location>
</feature>
<feature type="modified residue" description="Phosphothreonine" evidence="1">
    <location>
        <position position="135"/>
    </location>
</feature>
<feature type="modified residue" description="Phosphothreonine" evidence="1">
    <location>
        <position position="138"/>
    </location>
</feature>
<feature type="modified residue" description="Phosphoserine" evidence="1">
    <location>
        <position position="139"/>
    </location>
</feature>
<dbReference type="PIR" id="S06526">
    <property type="entry name" value="HAFQL"/>
</dbReference>
<dbReference type="SMR" id="P18969"/>
<dbReference type="GO" id="GO:0072562">
    <property type="term" value="C:blood microparticle"/>
    <property type="evidence" value="ECO:0007669"/>
    <property type="project" value="TreeGrafter"/>
</dbReference>
<dbReference type="GO" id="GO:0031838">
    <property type="term" value="C:haptoglobin-hemoglobin complex"/>
    <property type="evidence" value="ECO:0007669"/>
    <property type="project" value="TreeGrafter"/>
</dbReference>
<dbReference type="GO" id="GO:0005833">
    <property type="term" value="C:hemoglobin complex"/>
    <property type="evidence" value="ECO:0007669"/>
    <property type="project" value="InterPro"/>
</dbReference>
<dbReference type="GO" id="GO:0031720">
    <property type="term" value="F:haptoglobin binding"/>
    <property type="evidence" value="ECO:0007669"/>
    <property type="project" value="TreeGrafter"/>
</dbReference>
<dbReference type="GO" id="GO:0020037">
    <property type="term" value="F:heme binding"/>
    <property type="evidence" value="ECO:0007669"/>
    <property type="project" value="InterPro"/>
</dbReference>
<dbReference type="GO" id="GO:0005506">
    <property type="term" value="F:iron ion binding"/>
    <property type="evidence" value="ECO:0007669"/>
    <property type="project" value="InterPro"/>
</dbReference>
<dbReference type="GO" id="GO:0043177">
    <property type="term" value="F:organic acid binding"/>
    <property type="evidence" value="ECO:0007669"/>
    <property type="project" value="TreeGrafter"/>
</dbReference>
<dbReference type="GO" id="GO:0019825">
    <property type="term" value="F:oxygen binding"/>
    <property type="evidence" value="ECO:0007669"/>
    <property type="project" value="InterPro"/>
</dbReference>
<dbReference type="GO" id="GO:0005344">
    <property type="term" value="F:oxygen carrier activity"/>
    <property type="evidence" value="ECO:0007669"/>
    <property type="project" value="UniProtKB-KW"/>
</dbReference>
<dbReference type="GO" id="GO:0004601">
    <property type="term" value="F:peroxidase activity"/>
    <property type="evidence" value="ECO:0007669"/>
    <property type="project" value="TreeGrafter"/>
</dbReference>
<dbReference type="GO" id="GO:0042744">
    <property type="term" value="P:hydrogen peroxide catabolic process"/>
    <property type="evidence" value="ECO:0007669"/>
    <property type="project" value="TreeGrafter"/>
</dbReference>
<dbReference type="CDD" id="cd08927">
    <property type="entry name" value="Hb-alpha-like"/>
    <property type="match status" value="1"/>
</dbReference>
<dbReference type="FunFam" id="1.10.490.10:FF:000002">
    <property type="entry name" value="Hemoglobin subunit alpha"/>
    <property type="match status" value="1"/>
</dbReference>
<dbReference type="Gene3D" id="1.10.490.10">
    <property type="entry name" value="Globins"/>
    <property type="match status" value="1"/>
</dbReference>
<dbReference type="InterPro" id="IPR000971">
    <property type="entry name" value="Globin"/>
</dbReference>
<dbReference type="InterPro" id="IPR009050">
    <property type="entry name" value="Globin-like_sf"/>
</dbReference>
<dbReference type="InterPro" id="IPR012292">
    <property type="entry name" value="Globin/Proto"/>
</dbReference>
<dbReference type="InterPro" id="IPR002338">
    <property type="entry name" value="Hemoglobin_a-typ"/>
</dbReference>
<dbReference type="InterPro" id="IPR050056">
    <property type="entry name" value="Hemoglobin_oxygen_transport"/>
</dbReference>
<dbReference type="InterPro" id="IPR002339">
    <property type="entry name" value="Hemoglobin_pi"/>
</dbReference>
<dbReference type="PANTHER" id="PTHR11442">
    <property type="entry name" value="HEMOGLOBIN FAMILY MEMBER"/>
    <property type="match status" value="1"/>
</dbReference>
<dbReference type="PANTHER" id="PTHR11442:SF48">
    <property type="entry name" value="HEMOGLOBIN SUBUNIT ALPHA"/>
    <property type="match status" value="1"/>
</dbReference>
<dbReference type="Pfam" id="PF00042">
    <property type="entry name" value="Globin"/>
    <property type="match status" value="1"/>
</dbReference>
<dbReference type="PRINTS" id="PR00612">
    <property type="entry name" value="ALPHAHAEM"/>
</dbReference>
<dbReference type="PRINTS" id="PR00815">
    <property type="entry name" value="PIHAEM"/>
</dbReference>
<dbReference type="SUPFAM" id="SSF46458">
    <property type="entry name" value="Globin-like"/>
    <property type="match status" value="1"/>
</dbReference>
<dbReference type="PROSITE" id="PS01033">
    <property type="entry name" value="GLOBIN"/>
    <property type="match status" value="1"/>
</dbReference>
<comment type="function">
    <text>Involved in oxygen transport from the lung to the various peripheral tissues.</text>
</comment>
<comment type="function">
    <molecule>Hemopressin</molecule>
    <text evidence="2">Hemopressin acts as an antagonist peptide of the cannabinoid receptor CNR1. Hemopressin-binding efficiently blocks cannabinoid receptor CNR1 and subsequent signaling.</text>
</comment>
<comment type="subunit">
    <text>Heterotetramer of two alpha chains and two beta chains.</text>
</comment>
<comment type="tissue specificity">
    <text>Red blood cells.</text>
</comment>
<comment type="similarity">
    <text evidence="4">Belongs to the globin family.</text>
</comment>
<keyword id="KW-0007">Acetylation</keyword>
<keyword id="KW-0903">Direct protein sequencing</keyword>
<keyword id="KW-0349">Heme</keyword>
<keyword id="KW-0408">Iron</keyword>
<keyword id="KW-0479">Metal-binding</keyword>
<keyword id="KW-0561">Oxygen transport</keyword>
<keyword id="KW-0597">Phosphoprotein</keyword>
<keyword id="KW-0813">Transport</keyword>
<accession>P18969</accession>
<sequence>MVLSPADKTNVKSTWDKLGGHAGEYGGEALERTFASFPTTKTYFPHFDLSPGSAQVKAHGKKVADALTLAVGHLDDLPGALSALSDLHAHKLRVDPVNFKLLSHCLLVTLACHHPAEFTPAVHASLDKFFSAVSTVLTSKYR</sequence>
<reference key="1">
    <citation type="journal article" date="1986" name="Naturwissenschaften">
        <title>Hemoglobin of pandas: phylogenetic relationships of carnivores as ascertained with protein sequence data.</title>
        <authorList>
            <person name="Tagle D.A."/>
            <person name="Miyamoto M.M."/>
            <person name="Goodman M."/>
            <person name="Hofmann O."/>
            <person name="Braunitzer G."/>
            <person name="Goeltenboth R."/>
            <person name="Jalanka H."/>
        </authorList>
    </citation>
    <scope>PROTEIN SEQUENCE OF 2-142</scope>
</reference>
<protein>
    <recommendedName>
        <fullName>Hemoglobin subunit alpha</fullName>
    </recommendedName>
    <alternativeName>
        <fullName>Alpha-globin</fullName>
    </alternativeName>
    <alternativeName>
        <fullName>Hemoglobin alpha chain</fullName>
    </alternativeName>
    <component>
        <recommendedName>
            <fullName evidence="2">Hemopressin</fullName>
        </recommendedName>
    </component>
</protein>
<evidence type="ECO:0000250" key="1">
    <source>
        <dbReference type="UniProtKB" id="P01942"/>
    </source>
</evidence>
<evidence type="ECO:0000250" key="2">
    <source>
        <dbReference type="UniProtKB" id="P01946"/>
    </source>
</evidence>
<evidence type="ECO:0000250" key="3">
    <source>
        <dbReference type="UniProtKB" id="P69905"/>
    </source>
</evidence>
<evidence type="ECO:0000255" key="4">
    <source>
        <dbReference type="PROSITE-ProRule" id="PRU00238"/>
    </source>
</evidence>
<evidence type="ECO:0000269" key="5">
    <source>
    </source>
</evidence>
<proteinExistence type="evidence at protein level"/>
<name>HBA_AILFU</name>